<dbReference type="EMBL" id="CP000387">
    <property type="protein sequence ID" value="ABN45011.1"/>
    <property type="molecule type" value="Genomic_DNA"/>
</dbReference>
<dbReference type="RefSeq" id="WP_002894851.1">
    <property type="nucleotide sequence ID" value="NZ_CAXTYR010000001.1"/>
</dbReference>
<dbReference type="RefSeq" id="YP_001035561.1">
    <property type="nucleotide sequence ID" value="NC_009009.1"/>
</dbReference>
<dbReference type="SMR" id="A3CPA6"/>
<dbReference type="STRING" id="388919.SSA_1623"/>
<dbReference type="GeneID" id="48425989"/>
<dbReference type="KEGG" id="ssa:SSA_1623"/>
<dbReference type="PATRIC" id="fig|388919.9.peg.1541"/>
<dbReference type="eggNOG" id="COG0080">
    <property type="taxonomic scope" value="Bacteria"/>
</dbReference>
<dbReference type="HOGENOM" id="CLU_074237_2_1_9"/>
<dbReference type="OrthoDB" id="9802408at2"/>
<dbReference type="Proteomes" id="UP000002148">
    <property type="component" value="Chromosome"/>
</dbReference>
<dbReference type="GO" id="GO:0022625">
    <property type="term" value="C:cytosolic large ribosomal subunit"/>
    <property type="evidence" value="ECO:0007669"/>
    <property type="project" value="TreeGrafter"/>
</dbReference>
<dbReference type="GO" id="GO:0070180">
    <property type="term" value="F:large ribosomal subunit rRNA binding"/>
    <property type="evidence" value="ECO:0007669"/>
    <property type="project" value="UniProtKB-UniRule"/>
</dbReference>
<dbReference type="GO" id="GO:0003735">
    <property type="term" value="F:structural constituent of ribosome"/>
    <property type="evidence" value="ECO:0007669"/>
    <property type="project" value="InterPro"/>
</dbReference>
<dbReference type="GO" id="GO:0006412">
    <property type="term" value="P:translation"/>
    <property type="evidence" value="ECO:0007669"/>
    <property type="project" value="UniProtKB-UniRule"/>
</dbReference>
<dbReference type="CDD" id="cd00349">
    <property type="entry name" value="Ribosomal_L11"/>
    <property type="match status" value="1"/>
</dbReference>
<dbReference type="FunFam" id="1.10.10.250:FF:000001">
    <property type="entry name" value="50S ribosomal protein L11"/>
    <property type="match status" value="1"/>
</dbReference>
<dbReference type="FunFam" id="3.30.1550.10:FF:000001">
    <property type="entry name" value="50S ribosomal protein L11"/>
    <property type="match status" value="1"/>
</dbReference>
<dbReference type="Gene3D" id="1.10.10.250">
    <property type="entry name" value="Ribosomal protein L11, C-terminal domain"/>
    <property type="match status" value="1"/>
</dbReference>
<dbReference type="Gene3D" id="3.30.1550.10">
    <property type="entry name" value="Ribosomal protein L11/L12, N-terminal domain"/>
    <property type="match status" value="1"/>
</dbReference>
<dbReference type="HAMAP" id="MF_00736">
    <property type="entry name" value="Ribosomal_uL11"/>
    <property type="match status" value="1"/>
</dbReference>
<dbReference type="InterPro" id="IPR000911">
    <property type="entry name" value="Ribosomal_uL11"/>
</dbReference>
<dbReference type="InterPro" id="IPR006519">
    <property type="entry name" value="Ribosomal_uL11_bac-typ"/>
</dbReference>
<dbReference type="InterPro" id="IPR020783">
    <property type="entry name" value="Ribosomal_uL11_C"/>
</dbReference>
<dbReference type="InterPro" id="IPR036769">
    <property type="entry name" value="Ribosomal_uL11_C_sf"/>
</dbReference>
<dbReference type="InterPro" id="IPR020785">
    <property type="entry name" value="Ribosomal_uL11_CS"/>
</dbReference>
<dbReference type="InterPro" id="IPR020784">
    <property type="entry name" value="Ribosomal_uL11_N"/>
</dbReference>
<dbReference type="InterPro" id="IPR036796">
    <property type="entry name" value="Ribosomal_uL11_N_sf"/>
</dbReference>
<dbReference type="NCBIfam" id="TIGR01632">
    <property type="entry name" value="L11_bact"/>
    <property type="match status" value="1"/>
</dbReference>
<dbReference type="PANTHER" id="PTHR11661">
    <property type="entry name" value="60S RIBOSOMAL PROTEIN L12"/>
    <property type="match status" value="1"/>
</dbReference>
<dbReference type="PANTHER" id="PTHR11661:SF1">
    <property type="entry name" value="LARGE RIBOSOMAL SUBUNIT PROTEIN UL11M"/>
    <property type="match status" value="1"/>
</dbReference>
<dbReference type="Pfam" id="PF00298">
    <property type="entry name" value="Ribosomal_L11"/>
    <property type="match status" value="1"/>
</dbReference>
<dbReference type="Pfam" id="PF03946">
    <property type="entry name" value="Ribosomal_L11_N"/>
    <property type="match status" value="1"/>
</dbReference>
<dbReference type="SMART" id="SM00649">
    <property type="entry name" value="RL11"/>
    <property type="match status" value="1"/>
</dbReference>
<dbReference type="SUPFAM" id="SSF54747">
    <property type="entry name" value="Ribosomal L11/L12e N-terminal domain"/>
    <property type="match status" value="1"/>
</dbReference>
<dbReference type="SUPFAM" id="SSF46906">
    <property type="entry name" value="Ribosomal protein L11, C-terminal domain"/>
    <property type="match status" value="1"/>
</dbReference>
<dbReference type="PROSITE" id="PS00359">
    <property type="entry name" value="RIBOSOMAL_L11"/>
    <property type="match status" value="1"/>
</dbReference>
<accession>A3CPA6</accession>
<feature type="chain" id="PRO_1000046277" description="Large ribosomal subunit protein uL11">
    <location>
        <begin position="1"/>
        <end position="141"/>
    </location>
</feature>
<keyword id="KW-0488">Methylation</keyword>
<keyword id="KW-1185">Reference proteome</keyword>
<keyword id="KW-0687">Ribonucleoprotein</keyword>
<keyword id="KW-0689">Ribosomal protein</keyword>
<keyword id="KW-0694">RNA-binding</keyword>
<keyword id="KW-0699">rRNA-binding</keyword>
<proteinExistence type="inferred from homology"/>
<organism>
    <name type="scientific">Streptococcus sanguinis (strain SK36)</name>
    <dbReference type="NCBI Taxonomy" id="388919"/>
    <lineage>
        <taxon>Bacteria</taxon>
        <taxon>Bacillati</taxon>
        <taxon>Bacillota</taxon>
        <taxon>Bacilli</taxon>
        <taxon>Lactobacillales</taxon>
        <taxon>Streptococcaceae</taxon>
        <taxon>Streptococcus</taxon>
    </lineage>
</organism>
<reference key="1">
    <citation type="journal article" date="2007" name="J. Bacteriol.">
        <title>Genome of the opportunistic pathogen Streptococcus sanguinis.</title>
        <authorList>
            <person name="Xu P."/>
            <person name="Alves J.M."/>
            <person name="Kitten T."/>
            <person name="Brown A."/>
            <person name="Chen Z."/>
            <person name="Ozaki L.S."/>
            <person name="Manque P."/>
            <person name="Ge X."/>
            <person name="Serrano M.G."/>
            <person name="Puiu D."/>
            <person name="Hendricks S."/>
            <person name="Wang Y."/>
            <person name="Chaplin M.D."/>
            <person name="Akan D."/>
            <person name="Paik S."/>
            <person name="Peterson D.L."/>
            <person name="Macrina F.L."/>
            <person name="Buck G.A."/>
        </authorList>
    </citation>
    <scope>NUCLEOTIDE SEQUENCE [LARGE SCALE GENOMIC DNA]</scope>
    <source>
        <strain>SK36</strain>
    </source>
</reference>
<gene>
    <name evidence="1" type="primary">rplK</name>
    <name type="ordered locus">SSA_1623</name>
</gene>
<name>RL11_STRSV</name>
<sequence>MAKKVEKLVKLQIPAGKATPAPPVGPALGQAGINIMGFTKEFNARTADQAGMIIPVVISVYEDKSFTFVTKTPPAAVLLKKAAGVEKGSGEPNKTKVATVTRAQVQEIAETKMPDLNAANIESAMRMIEGTARSMGFTVVD</sequence>
<protein>
    <recommendedName>
        <fullName evidence="1">Large ribosomal subunit protein uL11</fullName>
    </recommendedName>
    <alternativeName>
        <fullName evidence="2">50S ribosomal protein L11</fullName>
    </alternativeName>
</protein>
<evidence type="ECO:0000255" key="1">
    <source>
        <dbReference type="HAMAP-Rule" id="MF_00736"/>
    </source>
</evidence>
<evidence type="ECO:0000305" key="2"/>
<comment type="function">
    <text evidence="1">Forms part of the ribosomal stalk which helps the ribosome interact with GTP-bound translation factors.</text>
</comment>
<comment type="subunit">
    <text evidence="1">Part of the ribosomal stalk of the 50S ribosomal subunit. Interacts with L10 and the large rRNA to form the base of the stalk. L10 forms an elongated spine to which L12 dimers bind in a sequential fashion forming a multimeric L10(L12)X complex.</text>
</comment>
<comment type="PTM">
    <text evidence="1">One or more lysine residues are methylated.</text>
</comment>
<comment type="similarity">
    <text evidence="1">Belongs to the universal ribosomal protein uL11 family.</text>
</comment>